<reference key="1">
    <citation type="journal article" date="2009" name="Genome Biol.">
        <title>Genomic and genetic analyses of diversity and plant interactions of Pseudomonas fluorescens.</title>
        <authorList>
            <person name="Silby M.W."/>
            <person name="Cerdeno-Tarraga A.M."/>
            <person name="Vernikos G.S."/>
            <person name="Giddens S.R."/>
            <person name="Jackson R.W."/>
            <person name="Preston G.M."/>
            <person name="Zhang X.-X."/>
            <person name="Moon C.D."/>
            <person name="Gehrig S.M."/>
            <person name="Godfrey S.A.C."/>
            <person name="Knight C.G."/>
            <person name="Malone J.G."/>
            <person name="Robinson Z."/>
            <person name="Spiers A.J."/>
            <person name="Harris S."/>
            <person name="Challis G.L."/>
            <person name="Yaxley A.M."/>
            <person name="Harris D."/>
            <person name="Seeger K."/>
            <person name="Murphy L."/>
            <person name="Rutter S."/>
            <person name="Squares R."/>
            <person name="Quail M.A."/>
            <person name="Saunders E."/>
            <person name="Mavromatis K."/>
            <person name="Brettin T.S."/>
            <person name="Bentley S.D."/>
            <person name="Hothersall J."/>
            <person name="Stephens E."/>
            <person name="Thomas C.M."/>
            <person name="Parkhill J."/>
            <person name="Levy S.B."/>
            <person name="Rainey P.B."/>
            <person name="Thomson N.R."/>
        </authorList>
    </citation>
    <scope>NUCLEOTIDE SEQUENCE [LARGE SCALE GENOMIC DNA]</scope>
    <source>
        <strain>Pf0-1</strain>
    </source>
</reference>
<feature type="chain" id="PRO_0000350337" description="Dual-specificity RNA methyltransferase RlmN">
    <location>
        <begin position="1"/>
        <end position="382"/>
    </location>
</feature>
<feature type="domain" description="Radical SAM core" evidence="2">
    <location>
        <begin position="102"/>
        <end position="342"/>
    </location>
</feature>
<feature type="active site" description="Proton acceptor" evidence="1">
    <location>
        <position position="96"/>
    </location>
</feature>
<feature type="active site" description="S-methylcysteine intermediate" evidence="1">
    <location>
        <position position="345"/>
    </location>
</feature>
<feature type="binding site" evidence="1">
    <location>
        <position position="116"/>
    </location>
    <ligand>
        <name>[4Fe-4S] cluster</name>
        <dbReference type="ChEBI" id="CHEBI:49883"/>
        <note>4Fe-4S-S-AdoMet</note>
    </ligand>
</feature>
<feature type="binding site" evidence="1">
    <location>
        <position position="120"/>
    </location>
    <ligand>
        <name>[4Fe-4S] cluster</name>
        <dbReference type="ChEBI" id="CHEBI:49883"/>
        <note>4Fe-4S-S-AdoMet</note>
    </ligand>
</feature>
<feature type="binding site" evidence="1">
    <location>
        <position position="123"/>
    </location>
    <ligand>
        <name>[4Fe-4S] cluster</name>
        <dbReference type="ChEBI" id="CHEBI:49883"/>
        <note>4Fe-4S-S-AdoMet</note>
    </ligand>
</feature>
<feature type="binding site" evidence="1">
    <location>
        <begin position="170"/>
        <end position="171"/>
    </location>
    <ligand>
        <name>S-adenosyl-L-methionine</name>
        <dbReference type="ChEBI" id="CHEBI:59789"/>
    </ligand>
</feature>
<feature type="binding site" evidence="1">
    <location>
        <position position="202"/>
    </location>
    <ligand>
        <name>S-adenosyl-L-methionine</name>
        <dbReference type="ChEBI" id="CHEBI:59789"/>
    </ligand>
</feature>
<feature type="binding site" evidence="1">
    <location>
        <begin position="224"/>
        <end position="226"/>
    </location>
    <ligand>
        <name>S-adenosyl-L-methionine</name>
        <dbReference type="ChEBI" id="CHEBI:59789"/>
    </ligand>
</feature>
<feature type="binding site" evidence="1">
    <location>
        <position position="302"/>
    </location>
    <ligand>
        <name>S-adenosyl-L-methionine</name>
        <dbReference type="ChEBI" id="CHEBI:59789"/>
    </ligand>
</feature>
<feature type="disulfide bond" description="(transient)" evidence="1">
    <location>
        <begin position="109"/>
        <end position="345"/>
    </location>
</feature>
<sequence>MTTSTVKNNLLGLTQPEMEKFFDSIGEKRFRAGQVMKWIHHFGVDDFDAMTNVSKALREKLKAVAEVRGPEVVSEDISSDGTRKWVVRVASGSCVETVYIPQGKRGTLCVSSQAGCALDCSFCSTGKQGFNSNLTAAEVIGQVWIANKSFGSVPATIDRAITNVVMMGMGEPLLNFDNVVAAMHLMMDDLGYGISKRRVTLSTSGVVPMIDELAKHIDVSLALSLHAPNDALRNQLVPINKKYPLKMLLESCQRYMSALGEKRVLTIEYTLLKDVNDKLEHAVEMIELLKDIPCKINLIPFNPFPHSGYERPSNNAIRRFQDQLHQAGFNVTVRTTRGEDIDAACGQLVGQVLDRTRRSERYIAVRELSADSDLAQNAANTN</sequence>
<evidence type="ECO:0000255" key="1">
    <source>
        <dbReference type="HAMAP-Rule" id="MF_01849"/>
    </source>
</evidence>
<evidence type="ECO:0000255" key="2">
    <source>
        <dbReference type="PROSITE-ProRule" id="PRU01266"/>
    </source>
</evidence>
<keyword id="KW-0004">4Fe-4S</keyword>
<keyword id="KW-0963">Cytoplasm</keyword>
<keyword id="KW-1015">Disulfide bond</keyword>
<keyword id="KW-0408">Iron</keyword>
<keyword id="KW-0411">Iron-sulfur</keyword>
<keyword id="KW-0479">Metal-binding</keyword>
<keyword id="KW-0489">Methyltransferase</keyword>
<keyword id="KW-0698">rRNA processing</keyword>
<keyword id="KW-0949">S-adenosyl-L-methionine</keyword>
<keyword id="KW-0808">Transferase</keyword>
<keyword id="KW-0819">tRNA processing</keyword>
<comment type="function">
    <text evidence="1">Specifically methylates position 2 of adenine 2503 in 23S rRNA and position 2 of adenine 37 in tRNAs. m2A2503 modification seems to play a crucial role in the proofreading step occurring at the peptidyl transferase center and thus would serve to optimize ribosomal fidelity.</text>
</comment>
<comment type="catalytic activity">
    <reaction evidence="1">
        <text>adenosine(2503) in 23S rRNA + 2 reduced [2Fe-2S]-[ferredoxin] + 2 S-adenosyl-L-methionine = 2-methyladenosine(2503) in 23S rRNA + 5'-deoxyadenosine + L-methionine + 2 oxidized [2Fe-2S]-[ferredoxin] + S-adenosyl-L-homocysteine</text>
        <dbReference type="Rhea" id="RHEA:42916"/>
        <dbReference type="Rhea" id="RHEA-COMP:10000"/>
        <dbReference type="Rhea" id="RHEA-COMP:10001"/>
        <dbReference type="Rhea" id="RHEA-COMP:10152"/>
        <dbReference type="Rhea" id="RHEA-COMP:10282"/>
        <dbReference type="ChEBI" id="CHEBI:17319"/>
        <dbReference type="ChEBI" id="CHEBI:33737"/>
        <dbReference type="ChEBI" id="CHEBI:33738"/>
        <dbReference type="ChEBI" id="CHEBI:57844"/>
        <dbReference type="ChEBI" id="CHEBI:57856"/>
        <dbReference type="ChEBI" id="CHEBI:59789"/>
        <dbReference type="ChEBI" id="CHEBI:74411"/>
        <dbReference type="ChEBI" id="CHEBI:74497"/>
        <dbReference type="EC" id="2.1.1.192"/>
    </reaction>
</comment>
<comment type="catalytic activity">
    <reaction evidence="1">
        <text>adenosine(37) in tRNA + 2 reduced [2Fe-2S]-[ferredoxin] + 2 S-adenosyl-L-methionine = 2-methyladenosine(37) in tRNA + 5'-deoxyadenosine + L-methionine + 2 oxidized [2Fe-2S]-[ferredoxin] + S-adenosyl-L-homocysteine</text>
        <dbReference type="Rhea" id="RHEA:43332"/>
        <dbReference type="Rhea" id="RHEA-COMP:10000"/>
        <dbReference type="Rhea" id="RHEA-COMP:10001"/>
        <dbReference type="Rhea" id="RHEA-COMP:10162"/>
        <dbReference type="Rhea" id="RHEA-COMP:10485"/>
        <dbReference type="ChEBI" id="CHEBI:17319"/>
        <dbReference type="ChEBI" id="CHEBI:33737"/>
        <dbReference type="ChEBI" id="CHEBI:33738"/>
        <dbReference type="ChEBI" id="CHEBI:57844"/>
        <dbReference type="ChEBI" id="CHEBI:57856"/>
        <dbReference type="ChEBI" id="CHEBI:59789"/>
        <dbReference type="ChEBI" id="CHEBI:74411"/>
        <dbReference type="ChEBI" id="CHEBI:74497"/>
        <dbReference type="EC" id="2.1.1.192"/>
    </reaction>
</comment>
<comment type="cofactor">
    <cofactor evidence="1">
        <name>[4Fe-4S] cluster</name>
        <dbReference type="ChEBI" id="CHEBI:49883"/>
    </cofactor>
    <text evidence="1">Binds 1 [4Fe-4S] cluster. The cluster is coordinated with 3 cysteines and an exchangeable S-adenosyl-L-methionine.</text>
</comment>
<comment type="subcellular location">
    <subcellularLocation>
        <location evidence="1">Cytoplasm</location>
    </subcellularLocation>
</comment>
<comment type="miscellaneous">
    <text evidence="1">Reaction proceeds by a ping-pong mechanism involving intermediate methylation of a conserved cysteine residue.</text>
</comment>
<comment type="similarity">
    <text evidence="1">Belongs to the radical SAM superfamily. RlmN family.</text>
</comment>
<protein>
    <recommendedName>
        <fullName evidence="1">Dual-specificity RNA methyltransferase RlmN</fullName>
        <ecNumber evidence="1">2.1.1.192</ecNumber>
    </recommendedName>
    <alternativeName>
        <fullName evidence="1">23S rRNA (adenine(2503)-C(2))-methyltransferase</fullName>
    </alternativeName>
    <alternativeName>
        <fullName evidence="1">23S rRNA m2A2503 methyltransferase</fullName>
    </alternativeName>
    <alternativeName>
        <fullName evidence="1">Ribosomal RNA large subunit methyltransferase N</fullName>
    </alternativeName>
    <alternativeName>
        <fullName evidence="1">tRNA (adenine(37)-C(2))-methyltransferase</fullName>
    </alternativeName>
    <alternativeName>
        <fullName evidence="1">tRNA m2A37 methyltransferase</fullName>
    </alternativeName>
</protein>
<dbReference type="EC" id="2.1.1.192" evidence="1"/>
<dbReference type="EMBL" id="CP000094">
    <property type="protein sequence ID" value="ABA76341.1"/>
    <property type="molecule type" value="Genomic_DNA"/>
</dbReference>
<dbReference type="RefSeq" id="WP_011335811.1">
    <property type="nucleotide sequence ID" value="NC_007492.2"/>
</dbReference>
<dbReference type="SMR" id="Q3K7B3"/>
<dbReference type="KEGG" id="pfo:Pfl01_4604"/>
<dbReference type="eggNOG" id="COG0820">
    <property type="taxonomic scope" value="Bacteria"/>
</dbReference>
<dbReference type="HOGENOM" id="CLU_029101_0_0_6"/>
<dbReference type="Proteomes" id="UP000002704">
    <property type="component" value="Chromosome"/>
</dbReference>
<dbReference type="GO" id="GO:0005737">
    <property type="term" value="C:cytoplasm"/>
    <property type="evidence" value="ECO:0007669"/>
    <property type="project" value="UniProtKB-SubCell"/>
</dbReference>
<dbReference type="GO" id="GO:0051539">
    <property type="term" value="F:4 iron, 4 sulfur cluster binding"/>
    <property type="evidence" value="ECO:0007669"/>
    <property type="project" value="UniProtKB-UniRule"/>
</dbReference>
<dbReference type="GO" id="GO:0046872">
    <property type="term" value="F:metal ion binding"/>
    <property type="evidence" value="ECO:0007669"/>
    <property type="project" value="UniProtKB-KW"/>
</dbReference>
<dbReference type="GO" id="GO:0070040">
    <property type="term" value="F:rRNA (adenine(2503)-C2-)-methyltransferase activity"/>
    <property type="evidence" value="ECO:0007669"/>
    <property type="project" value="UniProtKB-UniRule"/>
</dbReference>
<dbReference type="GO" id="GO:0019843">
    <property type="term" value="F:rRNA binding"/>
    <property type="evidence" value="ECO:0007669"/>
    <property type="project" value="UniProtKB-UniRule"/>
</dbReference>
<dbReference type="GO" id="GO:0002935">
    <property type="term" value="F:tRNA (adenine(37)-C2)-methyltransferase activity"/>
    <property type="evidence" value="ECO:0007669"/>
    <property type="project" value="UniProtKB-UniRule"/>
</dbReference>
<dbReference type="GO" id="GO:0000049">
    <property type="term" value="F:tRNA binding"/>
    <property type="evidence" value="ECO:0007669"/>
    <property type="project" value="UniProtKB-UniRule"/>
</dbReference>
<dbReference type="GO" id="GO:0070475">
    <property type="term" value="P:rRNA base methylation"/>
    <property type="evidence" value="ECO:0007669"/>
    <property type="project" value="UniProtKB-UniRule"/>
</dbReference>
<dbReference type="GO" id="GO:0030488">
    <property type="term" value="P:tRNA methylation"/>
    <property type="evidence" value="ECO:0007669"/>
    <property type="project" value="UniProtKB-UniRule"/>
</dbReference>
<dbReference type="CDD" id="cd01335">
    <property type="entry name" value="Radical_SAM"/>
    <property type="match status" value="1"/>
</dbReference>
<dbReference type="FunFam" id="1.10.150.530:FF:000003">
    <property type="entry name" value="Dual-specificity RNA methyltransferase RlmN"/>
    <property type="match status" value="1"/>
</dbReference>
<dbReference type="FunFam" id="3.20.20.70:FF:000008">
    <property type="entry name" value="Dual-specificity RNA methyltransferase RlmN"/>
    <property type="match status" value="1"/>
</dbReference>
<dbReference type="Gene3D" id="1.10.150.530">
    <property type="match status" value="1"/>
</dbReference>
<dbReference type="Gene3D" id="3.20.20.70">
    <property type="entry name" value="Aldolase class I"/>
    <property type="match status" value="1"/>
</dbReference>
<dbReference type="HAMAP" id="MF_01849">
    <property type="entry name" value="RNA_methyltr_RlmN"/>
    <property type="match status" value="1"/>
</dbReference>
<dbReference type="InterPro" id="IPR013785">
    <property type="entry name" value="Aldolase_TIM"/>
</dbReference>
<dbReference type="InterPro" id="IPR040072">
    <property type="entry name" value="Methyltransferase_A"/>
</dbReference>
<dbReference type="InterPro" id="IPR048641">
    <property type="entry name" value="RlmN_N"/>
</dbReference>
<dbReference type="InterPro" id="IPR027492">
    <property type="entry name" value="RNA_MTrfase_RlmN"/>
</dbReference>
<dbReference type="InterPro" id="IPR004383">
    <property type="entry name" value="rRNA_lsu_MTrfase_RlmN/Cfr"/>
</dbReference>
<dbReference type="InterPro" id="IPR007197">
    <property type="entry name" value="rSAM"/>
</dbReference>
<dbReference type="NCBIfam" id="TIGR00048">
    <property type="entry name" value="rRNA_mod_RlmN"/>
    <property type="match status" value="1"/>
</dbReference>
<dbReference type="PANTHER" id="PTHR30544">
    <property type="entry name" value="23S RRNA METHYLTRANSFERASE"/>
    <property type="match status" value="1"/>
</dbReference>
<dbReference type="PANTHER" id="PTHR30544:SF5">
    <property type="entry name" value="RADICAL SAM CORE DOMAIN-CONTAINING PROTEIN"/>
    <property type="match status" value="1"/>
</dbReference>
<dbReference type="Pfam" id="PF04055">
    <property type="entry name" value="Radical_SAM"/>
    <property type="match status" value="1"/>
</dbReference>
<dbReference type="Pfam" id="PF21016">
    <property type="entry name" value="RlmN_N"/>
    <property type="match status" value="1"/>
</dbReference>
<dbReference type="PIRSF" id="PIRSF006004">
    <property type="entry name" value="CHP00048"/>
    <property type="match status" value="1"/>
</dbReference>
<dbReference type="SFLD" id="SFLDF00275">
    <property type="entry name" value="adenosine_C2_methyltransferase"/>
    <property type="match status" value="1"/>
</dbReference>
<dbReference type="SFLD" id="SFLDS00029">
    <property type="entry name" value="Radical_SAM"/>
    <property type="match status" value="1"/>
</dbReference>
<dbReference type="SUPFAM" id="SSF102114">
    <property type="entry name" value="Radical SAM enzymes"/>
    <property type="match status" value="1"/>
</dbReference>
<dbReference type="PROSITE" id="PS51918">
    <property type="entry name" value="RADICAL_SAM"/>
    <property type="match status" value="1"/>
</dbReference>
<proteinExistence type="inferred from homology"/>
<accession>Q3K7B3</accession>
<organism>
    <name type="scientific">Pseudomonas fluorescens (strain Pf0-1)</name>
    <dbReference type="NCBI Taxonomy" id="205922"/>
    <lineage>
        <taxon>Bacteria</taxon>
        <taxon>Pseudomonadati</taxon>
        <taxon>Pseudomonadota</taxon>
        <taxon>Gammaproteobacteria</taxon>
        <taxon>Pseudomonadales</taxon>
        <taxon>Pseudomonadaceae</taxon>
        <taxon>Pseudomonas</taxon>
    </lineage>
</organism>
<gene>
    <name evidence="1" type="primary">rlmN</name>
    <name type="ordered locus">Pfl01_4604</name>
</gene>
<name>RLMN_PSEPF</name>